<accession>Q8EWX0</accession>
<organism>
    <name type="scientific">Malacoplasma penetrans (strain HF-2)</name>
    <name type="common">Mycoplasma penetrans</name>
    <dbReference type="NCBI Taxonomy" id="272633"/>
    <lineage>
        <taxon>Bacteria</taxon>
        <taxon>Bacillati</taxon>
        <taxon>Mycoplasmatota</taxon>
        <taxon>Mycoplasmoidales</taxon>
        <taxon>Mycoplasmoidaceae</taxon>
        <taxon>Malacoplasma</taxon>
    </lineage>
</organism>
<sequence length="1288" mass="145306">MNSKSSRITSIQIGLASPEKIREWSNGEVTKSETINYKSLKPEKDGLFDEAIFGPVKDYECACGKYKKIKFRGKICEKCGVEITESIVRRERVGHIELAAPIAHIWMTKELPCPSKISLVLDISYKEIEQVVYFVNYIVLDEGNGKFPKNFNFKEVIDLSSQKSSKETRSKLRKTLREIYESIDVEASMENAIKHKIARTFYDTLAESNMPFSIEEVFNFISSFTGMRFGIGAEAILELLKNIDLDKEYKDIYEKLRKSENTSDIKTKKLVRRLEAIKWLKDSNNKPEWMILKNIVVTPPDTRPIIQLEGGKFTTSDINSFYRKIIIRNERLKRVIQNNAPSIILNNEKRLLQEAVDALFDNASRKKPLLGKDKRPLKSLSEHLKGKQGLFRQNLLGKRVDYSGRSVIVIGPELKMYQVGIPVSMILKLFKPFIIHELIKKTDDEGNTKDPIVSNIKSAEKLILNQDNTIWPIINKVIKQRPVLLNRAPTLHRLGIQAFEPILVEGKAIRLHPLVTTAFNADFDGDQMAVHVPLSPEAVAEARTIILASWHILGPKDGKPIITPTQDMVLGNYYLTMEKLNMPGQGMLFANVDELKTVYQMKKVHVHSIIGIPTSAFPKKQFPKDGILITTVGKVILNDVLPEEMSYLNNPDNLEELSDNDIVEWGKDYRTFIEKKKVYKAFTKKTLSEIVNILHRKYSDASLEIVPSTMDKIKDIGFEYSTKSATTISAFDVPEYTEKEKYFEETDKKVEEMKKYYQKGLLTDDERYKKVVSAWSSVTNQVSKDIEKLIQKPEYLTNSIVIMANSGARGNISNFTQLSGMRGLMSKSYNYDQKQKSKVIKDTIEVPIKNSFIEGLTVSEYFNSSYGARKGMTDTAMKTSKSGYMTRKLVDATQDVIVNNEDCKTKKGTILEVIEDTKSGSVIESLNERLINRFPIFDVVHPKSKKVLAPAGEIITKAVANEIVDAGIDKVEVRSVLHCKEENGICQKCFGTDLTTNKLVEKYTAIGVIAAQSIGEPGTQLTMRTFHTGGVSSGTNIAQGFERLKQLFDIIPPKQWEKSIISEIEGKVSSIKASPDNPNILVVTIKNSKESINYKVPFDSELRVEEGDKVKPGSKITEGSIDVKELLKVAGIEVVRNYIIKEVQKVYRLQGIEIADKYIEVIIRQLTNKVQIQDSGNSDFFIGQIIDINTFRKENEKLILSDDKVPATAVNLIFGLDEAPSKTGSFLAAASFQDTKKILTDACVKGQIDSLNGLKENVIFGNLIPCGTGKKSNEDIIEEGNKMYELEY</sequence>
<reference key="1">
    <citation type="journal article" date="2002" name="Nucleic Acids Res.">
        <title>The complete genomic sequence of Mycoplasma penetrans, an intracellular bacterial pathogen in humans.</title>
        <authorList>
            <person name="Sasaki Y."/>
            <person name="Ishikawa J."/>
            <person name="Yamashita A."/>
            <person name="Oshima K."/>
            <person name="Kenri T."/>
            <person name="Furuya K."/>
            <person name="Yoshino C."/>
            <person name="Horino A."/>
            <person name="Shiba T."/>
            <person name="Sasaki T."/>
            <person name="Hattori M."/>
        </authorList>
    </citation>
    <scope>NUCLEOTIDE SEQUENCE [LARGE SCALE GENOMIC DNA]</scope>
    <source>
        <strain>HF-2</strain>
    </source>
</reference>
<dbReference type="EC" id="2.7.7.6" evidence="1"/>
<dbReference type="EMBL" id="BA000026">
    <property type="protein sequence ID" value="BAC43870.1"/>
    <property type="molecule type" value="Genomic_DNA"/>
</dbReference>
<dbReference type="RefSeq" id="WP_011076906.1">
    <property type="nucleotide sequence ID" value="NC_004432.1"/>
</dbReference>
<dbReference type="SMR" id="Q8EWX0"/>
<dbReference type="FunCoup" id="Q8EWX0">
    <property type="interactions" value="225"/>
</dbReference>
<dbReference type="STRING" id="272633.gene:10731171"/>
<dbReference type="KEGG" id="mpe:MYPE800"/>
<dbReference type="eggNOG" id="COG0086">
    <property type="taxonomic scope" value="Bacteria"/>
</dbReference>
<dbReference type="HOGENOM" id="CLU_000524_3_1_14"/>
<dbReference type="InParanoid" id="Q8EWX0"/>
<dbReference type="Proteomes" id="UP000002522">
    <property type="component" value="Chromosome"/>
</dbReference>
<dbReference type="GO" id="GO:0000428">
    <property type="term" value="C:DNA-directed RNA polymerase complex"/>
    <property type="evidence" value="ECO:0007669"/>
    <property type="project" value="UniProtKB-KW"/>
</dbReference>
<dbReference type="GO" id="GO:0003677">
    <property type="term" value="F:DNA binding"/>
    <property type="evidence" value="ECO:0007669"/>
    <property type="project" value="UniProtKB-UniRule"/>
</dbReference>
<dbReference type="GO" id="GO:0003899">
    <property type="term" value="F:DNA-directed RNA polymerase activity"/>
    <property type="evidence" value="ECO:0007669"/>
    <property type="project" value="UniProtKB-UniRule"/>
</dbReference>
<dbReference type="GO" id="GO:0000287">
    <property type="term" value="F:magnesium ion binding"/>
    <property type="evidence" value="ECO:0007669"/>
    <property type="project" value="UniProtKB-UniRule"/>
</dbReference>
<dbReference type="GO" id="GO:0008270">
    <property type="term" value="F:zinc ion binding"/>
    <property type="evidence" value="ECO:0007669"/>
    <property type="project" value="UniProtKB-UniRule"/>
</dbReference>
<dbReference type="GO" id="GO:0006351">
    <property type="term" value="P:DNA-templated transcription"/>
    <property type="evidence" value="ECO:0007669"/>
    <property type="project" value="UniProtKB-UniRule"/>
</dbReference>
<dbReference type="CDD" id="cd02655">
    <property type="entry name" value="RNAP_beta'_C"/>
    <property type="match status" value="1"/>
</dbReference>
<dbReference type="CDD" id="cd01609">
    <property type="entry name" value="RNAP_beta'_N"/>
    <property type="match status" value="1"/>
</dbReference>
<dbReference type="Gene3D" id="1.10.132.30">
    <property type="match status" value="1"/>
</dbReference>
<dbReference type="Gene3D" id="1.10.150.390">
    <property type="match status" value="1"/>
</dbReference>
<dbReference type="Gene3D" id="1.10.1790.20">
    <property type="match status" value="1"/>
</dbReference>
<dbReference type="Gene3D" id="1.10.40.90">
    <property type="match status" value="1"/>
</dbReference>
<dbReference type="Gene3D" id="2.40.40.20">
    <property type="match status" value="1"/>
</dbReference>
<dbReference type="Gene3D" id="2.40.50.100">
    <property type="match status" value="1"/>
</dbReference>
<dbReference type="Gene3D" id="4.10.860.120">
    <property type="entry name" value="RNA polymerase II, clamp domain"/>
    <property type="match status" value="1"/>
</dbReference>
<dbReference type="Gene3D" id="1.10.274.100">
    <property type="entry name" value="RNA polymerase Rpb1, domain 3"/>
    <property type="match status" value="1"/>
</dbReference>
<dbReference type="HAMAP" id="MF_01322">
    <property type="entry name" value="RNApol_bact_RpoC"/>
    <property type="match status" value="1"/>
</dbReference>
<dbReference type="InterPro" id="IPR045867">
    <property type="entry name" value="DNA-dir_RpoC_beta_prime"/>
</dbReference>
<dbReference type="InterPro" id="IPR012754">
    <property type="entry name" value="DNA-dir_RpoC_beta_prime_bact"/>
</dbReference>
<dbReference type="InterPro" id="IPR000722">
    <property type="entry name" value="RNA_pol_asu"/>
</dbReference>
<dbReference type="InterPro" id="IPR006592">
    <property type="entry name" value="RNA_pol_N"/>
</dbReference>
<dbReference type="InterPro" id="IPR007080">
    <property type="entry name" value="RNA_pol_Rpb1_1"/>
</dbReference>
<dbReference type="InterPro" id="IPR007066">
    <property type="entry name" value="RNA_pol_Rpb1_3"/>
</dbReference>
<dbReference type="InterPro" id="IPR042102">
    <property type="entry name" value="RNA_pol_Rpb1_3_sf"/>
</dbReference>
<dbReference type="InterPro" id="IPR007083">
    <property type="entry name" value="RNA_pol_Rpb1_4"/>
</dbReference>
<dbReference type="InterPro" id="IPR007081">
    <property type="entry name" value="RNA_pol_Rpb1_5"/>
</dbReference>
<dbReference type="InterPro" id="IPR044893">
    <property type="entry name" value="RNA_pol_Rpb1_clamp_domain"/>
</dbReference>
<dbReference type="InterPro" id="IPR038120">
    <property type="entry name" value="Rpb1_funnel_sf"/>
</dbReference>
<dbReference type="NCBIfam" id="TIGR02386">
    <property type="entry name" value="rpoC_TIGR"/>
    <property type="match status" value="1"/>
</dbReference>
<dbReference type="PANTHER" id="PTHR19376">
    <property type="entry name" value="DNA-DIRECTED RNA POLYMERASE"/>
    <property type="match status" value="1"/>
</dbReference>
<dbReference type="PANTHER" id="PTHR19376:SF54">
    <property type="entry name" value="DNA-DIRECTED RNA POLYMERASE SUBUNIT BETA"/>
    <property type="match status" value="1"/>
</dbReference>
<dbReference type="Pfam" id="PF04997">
    <property type="entry name" value="RNA_pol_Rpb1_1"/>
    <property type="match status" value="1"/>
</dbReference>
<dbReference type="Pfam" id="PF00623">
    <property type="entry name" value="RNA_pol_Rpb1_2"/>
    <property type="match status" value="1"/>
</dbReference>
<dbReference type="Pfam" id="PF04983">
    <property type="entry name" value="RNA_pol_Rpb1_3"/>
    <property type="match status" value="1"/>
</dbReference>
<dbReference type="Pfam" id="PF05000">
    <property type="entry name" value="RNA_pol_Rpb1_4"/>
    <property type="match status" value="1"/>
</dbReference>
<dbReference type="Pfam" id="PF04998">
    <property type="entry name" value="RNA_pol_Rpb1_5"/>
    <property type="match status" value="1"/>
</dbReference>
<dbReference type="SMART" id="SM00663">
    <property type="entry name" value="RPOLA_N"/>
    <property type="match status" value="1"/>
</dbReference>
<dbReference type="SUPFAM" id="SSF64484">
    <property type="entry name" value="beta and beta-prime subunits of DNA dependent RNA-polymerase"/>
    <property type="match status" value="1"/>
</dbReference>
<evidence type="ECO:0000255" key="1">
    <source>
        <dbReference type="HAMAP-Rule" id="MF_01322"/>
    </source>
</evidence>
<feature type="chain" id="PRO_0000067762" description="DNA-directed RNA polymerase subunit beta'">
    <location>
        <begin position="1"/>
        <end position="1288"/>
    </location>
</feature>
<feature type="binding site" evidence="1">
    <location>
        <position position="61"/>
    </location>
    <ligand>
        <name>Zn(2+)</name>
        <dbReference type="ChEBI" id="CHEBI:29105"/>
        <label>1</label>
    </ligand>
</feature>
<feature type="binding site" evidence="1">
    <location>
        <position position="63"/>
    </location>
    <ligand>
        <name>Zn(2+)</name>
        <dbReference type="ChEBI" id="CHEBI:29105"/>
        <label>1</label>
    </ligand>
</feature>
<feature type="binding site" evidence="1">
    <location>
        <position position="76"/>
    </location>
    <ligand>
        <name>Zn(2+)</name>
        <dbReference type="ChEBI" id="CHEBI:29105"/>
        <label>1</label>
    </ligand>
</feature>
<feature type="binding site" evidence="1">
    <location>
        <position position="79"/>
    </location>
    <ligand>
        <name>Zn(2+)</name>
        <dbReference type="ChEBI" id="CHEBI:29105"/>
        <label>1</label>
    </ligand>
</feature>
<feature type="binding site" evidence="1">
    <location>
        <position position="522"/>
    </location>
    <ligand>
        <name>Mg(2+)</name>
        <dbReference type="ChEBI" id="CHEBI:18420"/>
    </ligand>
</feature>
<feature type="binding site" evidence="1">
    <location>
        <position position="524"/>
    </location>
    <ligand>
        <name>Mg(2+)</name>
        <dbReference type="ChEBI" id="CHEBI:18420"/>
    </ligand>
</feature>
<feature type="binding site" evidence="1">
    <location>
        <position position="526"/>
    </location>
    <ligand>
        <name>Mg(2+)</name>
        <dbReference type="ChEBI" id="CHEBI:18420"/>
    </ligand>
</feature>
<feature type="binding site" evidence="1">
    <location>
        <position position="903"/>
    </location>
    <ligand>
        <name>Zn(2+)</name>
        <dbReference type="ChEBI" id="CHEBI:29105"/>
        <label>2</label>
    </ligand>
</feature>
<feature type="binding site" evidence="1">
    <location>
        <position position="979"/>
    </location>
    <ligand>
        <name>Zn(2+)</name>
        <dbReference type="ChEBI" id="CHEBI:29105"/>
        <label>2</label>
    </ligand>
</feature>
<feature type="binding site" evidence="1">
    <location>
        <position position="986"/>
    </location>
    <ligand>
        <name>Zn(2+)</name>
        <dbReference type="ChEBI" id="CHEBI:29105"/>
        <label>2</label>
    </ligand>
</feature>
<feature type="binding site" evidence="1">
    <location>
        <position position="989"/>
    </location>
    <ligand>
        <name>Zn(2+)</name>
        <dbReference type="ChEBI" id="CHEBI:29105"/>
        <label>2</label>
    </ligand>
</feature>
<proteinExistence type="inferred from homology"/>
<keyword id="KW-0240">DNA-directed RNA polymerase</keyword>
<keyword id="KW-0460">Magnesium</keyword>
<keyword id="KW-0479">Metal-binding</keyword>
<keyword id="KW-0548">Nucleotidyltransferase</keyword>
<keyword id="KW-1185">Reference proteome</keyword>
<keyword id="KW-0804">Transcription</keyword>
<keyword id="KW-0808">Transferase</keyword>
<keyword id="KW-0862">Zinc</keyword>
<name>RPOC_MALP2</name>
<protein>
    <recommendedName>
        <fullName evidence="1">DNA-directed RNA polymerase subunit beta'</fullName>
        <shortName evidence="1">RNAP subunit beta'</shortName>
        <ecNumber evidence="1">2.7.7.6</ecNumber>
    </recommendedName>
    <alternativeName>
        <fullName evidence="1">RNA polymerase subunit beta'</fullName>
    </alternativeName>
    <alternativeName>
        <fullName evidence="1">Transcriptase subunit beta'</fullName>
    </alternativeName>
</protein>
<comment type="function">
    <text evidence="1">DNA-dependent RNA polymerase catalyzes the transcription of DNA into RNA using the four ribonucleoside triphosphates as substrates.</text>
</comment>
<comment type="catalytic activity">
    <reaction evidence="1">
        <text>RNA(n) + a ribonucleoside 5'-triphosphate = RNA(n+1) + diphosphate</text>
        <dbReference type="Rhea" id="RHEA:21248"/>
        <dbReference type="Rhea" id="RHEA-COMP:14527"/>
        <dbReference type="Rhea" id="RHEA-COMP:17342"/>
        <dbReference type="ChEBI" id="CHEBI:33019"/>
        <dbReference type="ChEBI" id="CHEBI:61557"/>
        <dbReference type="ChEBI" id="CHEBI:140395"/>
        <dbReference type="EC" id="2.7.7.6"/>
    </reaction>
</comment>
<comment type="cofactor">
    <cofactor evidence="1">
        <name>Mg(2+)</name>
        <dbReference type="ChEBI" id="CHEBI:18420"/>
    </cofactor>
    <text evidence="1">Binds 1 Mg(2+) ion per subunit.</text>
</comment>
<comment type="cofactor">
    <cofactor evidence="1">
        <name>Zn(2+)</name>
        <dbReference type="ChEBI" id="CHEBI:29105"/>
    </cofactor>
    <text evidence="1">Binds 2 Zn(2+) ions per subunit.</text>
</comment>
<comment type="subunit">
    <text evidence="1">The RNAP catalytic core consists of 2 alpha, 1 beta, 1 beta' and 1 omega subunit. When a sigma factor is associated with the core the holoenzyme is formed, which can initiate transcription.</text>
</comment>
<comment type="similarity">
    <text evidence="1">Belongs to the RNA polymerase beta' chain family.</text>
</comment>
<gene>
    <name evidence="1" type="primary">rpoC</name>
    <name type="ordered locus">MYPE800</name>
</gene>